<reference key="1">
    <citation type="journal article" date="2001" name="J. Bacteriol.">
        <title>Genome sequence and comparative analysis of the solvent-producing bacterium Clostridium acetobutylicum.</title>
        <authorList>
            <person name="Noelling J."/>
            <person name="Breton G."/>
            <person name="Omelchenko M.V."/>
            <person name="Makarova K.S."/>
            <person name="Zeng Q."/>
            <person name="Gibson R."/>
            <person name="Lee H.M."/>
            <person name="Dubois J."/>
            <person name="Qiu D."/>
            <person name="Hitti J."/>
            <person name="Wolf Y.I."/>
            <person name="Tatusov R.L."/>
            <person name="Sabathe F."/>
            <person name="Doucette-Stamm L.A."/>
            <person name="Soucaille P."/>
            <person name="Daly M.J."/>
            <person name="Bennett G.N."/>
            <person name="Koonin E.V."/>
            <person name="Smith D.R."/>
        </authorList>
    </citation>
    <scope>NUCLEOTIDE SEQUENCE [LARGE SCALE GENOMIC DNA]</scope>
    <source>
        <strain>ATCC 824 / DSM 792 / JCM 1419 / IAM 19013 / LMG 5710 / NBRC 13948 / NRRL B-527 / VKM B-1787 / 2291 / W</strain>
    </source>
</reference>
<reference key="2">
    <citation type="journal article" date="2004" name="FEMS Microbiol. Lett.">
        <title>A rubrerythrin-like oxidative stress protein of Clostridium acetobutylicum is encoded by a duplicated gene and identical to the heat shock protein Hsp21.</title>
        <authorList>
            <person name="May A."/>
            <person name="Hillmann F."/>
            <person name="Riebe O."/>
            <person name="Fischer R.J."/>
            <person name="Bahl H."/>
        </authorList>
    </citation>
    <scope>GENE NAME</scope>
    <scope>NO INDUCTION BY AIR OR H(2)O(2)</scope>
    <source>
        <strain>ATCC 824 / DSM 792 / JCM 1419 / IAM 19013 / LMG 5710 / NBRC 13948 / NRRL B-527 / VKM B-1787 / 2291 / W</strain>
    </source>
</reference>
<reference key="3">
    <citation type="journal article" date="2006" name="Arch. Microbiol.">
        <title>The rubrerythrin-like protein Hsp21 of Clostridium acetobutylicum is a general stress protein.</title>
        <authorList>
            <person name="Hillmann F."/>
            <person name="Fischer R.J."/>
            <person name="Bahl H."/>
        </authorList>
    </citation>
    <scope>NO INDUCTION BY VARIOUS ENVIRONMENTAL STRESS CONDITIONS</scope>
    <source>
        <strain>ATCC 824 / DSM 792 / JCM 1419 / IAM 19013 / LMG 5710 / NBRC 13948 / NRRL B-527 / VKM B-1787 / 2291 / W</strain>
    </source>
</reference>
<reference key="4">
    <citation type="journal article" date="2008" name="Mol. Microbiol.">
        <title>PerR acts as a switch for oxygen tolerance in the strict anaerobe Clostridium acetobutylicum.</title>
        <authorList>
            <person name="Hillmann F."/>
            <person name="Fischer R.J."/>
            <person name="Saint-Prix F."/>
            <person name="Girbal L."/>
            <person name="Bahl H."/>
        </authorList>
    </citation>
    <scope>NO REPRESSION BY PERR</scope>
    <source>
        <strain>ATCC 824 / DSM 792 / JCM 1419 / IAM 19013 / LMG 5710 / NBRC 13948 / NRRL B-527 / VKM B-1787 / 2291 / W</strain>
    </source>
</reference>
<reference key="5">
    <citation type="journal article" date="2009" name="J. Bacteriol.">
        <title>The role of PerR in O2-affected gene expression of Clostridium acetobutylicum.</title>
        <authorList>
            <person name="Hillmann F."/>
            <person name="Doring C."/>
            <person name="Riebe O."/>
            <person name="Ehrenreich A."/>
            <person name="Fischer R.J."/>
            <person name="Bahl H."/>
        </authorList>
    </citation>
    <scope>NO INDUCTION BY O(2)</scope>
    <scope>NO REPRESSION BY PERR</scope>
    <source>
        <strain>ATCC 824 / DSM 792 / JCM 1419 / IAM 19013 / LMG 5710 / NBRC 13948 / NRRL B-527 / VKM B-1787 / 2291 / W</strain>
    </source>
</reference>
<reference key="6">
    <citation type="journal article" date="2009" name="Microbiology">
        <title>Pathway for H2O2 and O2 detoxification in Clostridium acetobutylicum.</title>
        <authorList>
            <person name="Riebe O."/>
            <person name="Fischer R.J."/>
            <person name="Wampler D.A."/>
            <person name="Kurtz D.M. Jr."/>
            <person name="Bahl H."/>
        </authorList>
    </citation>
    <scope>FUNCTION</scope>
    <scope>CATALYTIC ACTIVITY</scope>
    <scope>ACTIVITY REGULATION</scope>
    <scope>SUBUNIT</scope>
    <source>
        <strain>ATCC 824 / DSM 792 / JCM 1419 / IAM 19013 / LMG 5710 / NBRC 13948 / NRRL B-527 / VKM B-1787 / 2291 / W</strain>
    </source>
</reference>
<name>RUBY1_CLOAB</name>
<proteinExistence type="evidence at protein level"/>
<keyword id="KW-0249">Electron transport</keyword>
<keyword id="KW-0408">Iron</keyword>
<keyword id="KW-0479">Metal-binding</keyword>
<keyword id="KW-0520">NAD</keyword>
<keyword id="KW-0560">Oxidoreductase</keyword>
<keyword id="KW-0575">Peroxidase</keyword>
<keyword id="KW-1185">Reference proteome</keyword>
<keyword id="KW-0813">Transport</keyword>
<comment type="function">
    <text evidence="5">Functions as the terminal component of an NADH peroxidase (NADH:H(2)O(2) oxidoreductase) when using NADH:rubredoxin oxidoreductase (NROR) as the electron transport intermediary from NADH to RubY.</text>
</comment>
<comment type="catalytic activity">
    <reaction evidence="5">
        <text>H2O2 + NADH + H(+) = NAD(+) + 2 H2O</text>
        <dbReference type="Rhea" id="RHEA:18509"/>
        <dbReference type="ChEBI" id="CHEBI:15377"/>
        <dbReference type="ChEBI" id="CHEBI:15378"/>
        <dbReference type="ChEBI" id="CHEBI:16240"/>
        <dbReference type="ChEBI" id="CHEBI:57540"/>
        <dbReference type="ChEBI" id="CHEBI:57945"/>
        <dbReference type="EC" id="1.11.1.1"/>
    </reaction>
</comment>
<comment type="cofactor">
    <cofactor evidence="1">
        <name>Fe(3+)</name>
        <dbReference type="ChEBI" id="CHEBI:29034"/>
    </cofactor>
    <text evidence="1">Binds 3 Fe(3+) ions per subunit.</text>
</comment>
<comment type="activity regulation">
    <text evidence="5">Rubredoxin (Rd) increases the NADH consumption rate by serving as an intermediary electron-transfer shuttle between NROR and RubY.</text>
</comment>
<comment type="subunit">
    <text evidence="5">Homodimer.</text>
</comment>
<comment type="induction">
    <text>Various environmental stress conditions, e.g. oxidative stress (exposure to air or H(2)O(2)) and other stress factors such as salt, increased pH, high concentration of solvents or cold shock, do not lead to increased transcript levels of this gene. Is not repressed by PerR.</text>
</comment>
<accession>Q97FZ9</accession>
<sequence length="195" mass="22158">MKSLKGTKTAENLMKAFAGESQARNRYTFYSNTAKKEGYVQISNIFLETAENERMHAKRFFKFLSEGLDDEAVEINGASYPTTLGDTKKNLIAAAKGENEEWTDLYPSFAKTAEDEGFKGVAAAFRLIAAVEKEHEKRYNALLKNIEENKVFEKDEVKFWKCIKCGYIFEGKTAPKVCPACLHPQAYFEILSENY</sequence>
<gene>
    <name type="primary">rbr1</name>
    <name type="synonym">rubY</name>
    <name type="ordered locus">CA_C2575</name>
</gene>
<dbReference type="EC" id="1.11.1.1"/>
<dbReference type="EMBL" id="AE001437">
    <property type="protein sequence ID" value="AAK80524.1"/>
    <property type="molecule type" value="Genomic_DNA"/>
</dbReference>
<dbReference type="PIR" id="A97217">
    <property type="entry name" value="A97217"/>
</dbReference>
<dbReference type="RefSeq" id="NP_349184.1">
    <property type="nucleotide sequence ID" value="NC_003030.1"/>
</dbReference>
<dbReference type="RefSeq" id="WP_010965865.1">
    <property type="nucleotide sequence ID" value="NC_003030.1"/>
</dbReference>
<dbReference type="SMR" id="Q97FZ9"/>
<dbReference type="STRING" id="272562.CA_C2575"/>
<dbReference type="GeneID" id="44999044"/>
<dbReference type="KEGG" id="cac:CA_C2575"/>
<dbReference type="PATRIC" id="fig|272562.8.peg.2764"/>
<dbReference type="eggNOG" id="COG1592">
    <property type="taxonomic scope" value="Bacteria"/>
</dbReference>
<dbReference type="HOGENOM" id="CLU_095256_0_1_9"/>
<dbReference type="OrthoDB" id="9799749at2"/>
<dbReference type="Proteomes" id="UP000000814">
    <property type="component" value="Chromosome"/>
</dbReference>
<dbReference type="GO" id="GO:0009055">
    <property type="term" value="F:electron transfer activity"/>
    <property type="evidence" value="ECO:0000314"/>
    <property type="project" value="UniProtKB"/>
</dbReference>
<dbReference type="GO" id="GO:0005506">
    <property type="term" value="F:iron ion binding"/>
    <property type="evidence" value="ECO:0007669"/>
    <property type="project" value="InterPro"/>
</dbReference>
<dbReference type="GO" id="GO:0016692">
    <property type="term" value="F:NADH peroxidase activity"/>
    <property type="evidence" value="ECO:0000314"/>
    <property type="project" value="UniProtKB"/>
</dbReference>
<dbReference type="CDD" id="cd00729">
    <property type="entry name" value="rubredoxin_SM"/>
    <property type="match status" value="1"/>
</dbReference>
<dbReference type="CDD" id="cd01041">
    <property type="entry name" value="Rubrerythrin"/>
    <property type="match status" value="1"/>
</dbReference>
<dbReference type="FunFam" id="2.20.28.10:FF:000018">
    <property type="entry name" value="Rubrerythrin"/>
    <property type="match status" value="1"/>
</dbReference>
<dbReference type="Gene3D" id="1.20.1260.10">
    <property type="match status" value="1"/>
</dbReference>
<dbReference type="Gene3D" id="2.20.28.10">
    <property type="match status" value="1"/>
</dbReference>
<dbReference type="InterPro" id="IPR012347">
    <property type="entry name" value="Ferritin-like"/>
</dbReference>
<dbReference type="InterPro" id="IPR009040">
    <property type="entry name" value="Ferritin-like_diiron"/>
</dbReference>
<dbReference type="InterPro" id="IPR009078">
    <property type="entry name" value="Ferritin-like_SF"/>
</dbReference>
<dbReference type="InterPro" id="IPR003251">
    <property type="entry name" value="Rr_diiron-bd_dom"/>
</dbReference>
<dbReference type="InterPro" id="IPR024934">
    <property type="entry name" value="Rubredoxin-like_dom"/>
</dbReference>
<dbReference type="InterPro" id="IPR052364">
    <property type="entry name" value="Rubrerythrin"/>
</dbReference>
<dbReference type="InterPro" id="IPR048574">
    <property type="entry name" value="RUBY_RBDX"/>
</dbReference>
<dbReference type="NCBIfam" id="NF045767">
    <property type="entry name" value="RuberyRbr"/>
    <property type="match status" value="1"/>
</dbReference>
<dbReference type="PANTHER" id="PTHR43865">
    <property type="entry name" value="RUBRERYTHRIN-RELATED"/>
    <property type="match status" value="1"/>
</dbReference>
<dbReference type="PANTHER" id="PTHR43865:SF1">
    <property type="entry name" value="RUBRERYTHRIN-RELATED"/>
    <property type="match status" value="1"/>
</dbReference>
<dbReference type="Pfam" id="PF02915">
    <property type="entry name" value="Rubrerythrin"/>
    <property type="match status" value="1"/>
</dbReference>
<dbReference type="Pfam" id="PF21349">
    <property type="entry name" value="RUBY_RBDX"/>
    <property type="match status" value="1"/>
</dbReference>
<dbReference type="SUPFAM" id="SSF47240">
    <property type="entry name" value="Ferritin-like"/>
    <property type="match status" value="1"/>
</dbReference>
<dbReference type="SUPFAM" id="SSF57802">
    <property type="entry name" value="Rubredoxin-like"/>
    <property type="match status" value="1"/>
</dbReference>
<dbReference type="PROSITE" id="PS50905">
    <property type="entry name" value="FERRITIN_LIKE"/>
    <property type="match status" value="1"/>
</dbReference>
<dbReference type="PROSITE" id="PS50903">
    <property type="entry name" value="RUBREDOXIN_LIKE"/>
    <property type="match status" value="1"/>
</dbReference>
<feature type="chain" id="PRO_0000405532" description="Rubrerythrin-1">
    <location>
        <begin position="1"/>
        <end position="195"/>
    </location>
</feature>
<feature type="domain" description="Ferritin-like diiron" evidence="3">
    <location>
        <begin position="3"/>
        <end position="150"/>
    </location>
</feature>
<feature type="domain" description="Rubredoxin-like" evidence="4">
    <location>
        <begin position="157"/>
        <end position="191"/>
    </location>
</feature>
<feature type="binding site" evidence="2">
    <location>
        <position position="20"/>
    </location>
    <ligand>
        <name>Fe(3+)</name>
        <dbReference type="ChEBI" id="CHEBI:29034"/>
        <label>1</label>
    </ligand>
</feature>
<feature type="binding site" evidence="2">
    <location>
        <position position="53"/>
    </location>
    <ligand>
        <name>Fe(3+)</name>
        <dbReference type="ChEBI" id="CHEBI:29034"/>
        <label>1</label>
    </ligand>
</feature>
<feature type="binding site" evidence="2">
    <location>
        <position position="53"/>
    </location>
    <ligand>
        <name>Fe(3+)</name>
        <dbReference type="ChEBI" id="CHEBI:29034"/>
        <label>2</label>
    </ligand>
</feature>
<feature type="binding site" evidence="2">
    <location>
        <position position="98"/>
    </location>
    <ligand>
        <name>Fe(3+)</name>
        <dbReference type="ChEBI" id="CHEBI:29034"/>
        <label>2</label>
    </ligand>
</feature>
<feature type="binding site" evidence="2">
    <location>
        <position position="101"/>
    </location>
    <ligand>
        <name>Fe(3+)</name>
        <dbReference type="ChEBI" id="CHEBI:29034"/>
        <label>1</label>
    </ligand>
</feature>
<feature type="binding site" evidence="2">
    <location>
        <position position="132"/>
    </location>
    <ligand>
        <name>Fe(3+)</name>
        <dbReference type="ChEBI" id="CHEBI:29034"/>
        <label>1</label>
    </ligand>
</feature>
<feature type="binding site" evidence="2">
    <location>
        <position position="132"/>
    </location>
    <ligand>
        <name>Fe(3+)</name>
        <dbReference type="ChEBI" id="CHEBI:29034"/>
        <label>2</label>
    </ligand>
</feature>
<feature type="binding site" evidence="2">
    <location>
        <position position="135"/>
    </location>
    <ligand>
        <name>Fe(3+)</name>
        <dbReference type="ChEBI" id="CHEBI:29034"/>
        <label>2</label>
    </ligand>
</feature>
<feature type="binding site" evidence="2">
    <location>
        <position position="162"/>
    </location>
    <ligand>
        <name>Fe(3+)</name>
        <dbReference type="ChEBI" id="CHEBI:29034"/>
        <label>3</label>
    </ligand>
</feature>
<feature type="binding site" evidence="2">
    <location>
        <position position="165"/>
    </location>
    <ligand>
        <name>Fe(3+)</name>
        <dbReference type="ChEBI" id="CHEBI:29034"/>
        <label>3</label>
    </ligand>
</feature>
<feature type="binding site" evidence="2">
    <location>
        <position position="178"/>
    </location>
    <ligand>
        <name>Fe(3+)</name>
        <dbReference type="ChEBI" id="CHEBI:29034"/>
        <label>3</label>
    </ligand>
</feature>
<feature type="binding site" evidence="2">
    <location>
        <position position="181"/>
    </location>
    <ligand>
        <name>Fe(3+)</name>
        <dbReference type="ChEBI" id="CHEBI:29034"/>
        <label>3</label>
    </ligand>
</feature>
<organism>
    <name type="scientific">Clostridium acetobutylicum (strain ATCC 824 / DSM 792 / JCM 1419 / IAM 19013 / LMG 5710 / NBRC 13948 / NRRL B-527 / VKM B-1787 / 2291 / W)</name>
    <dbReference type="NCBI Taxonomy" id="272562"/>
    <lineage>
        <taxon>Bacteria</taxon>
        <taxon>Bacillati</taxon>
        <taxon>Bacillota</taxon>
        <taxon>Clostridia</taxon>
        <taxon>Eubacteriales</taxon>
        <taxon>Clostridiaceae</taxon>
        <taxon>Clostridium</taxon>
    </lineage>
</organism>
<protein>
    <recommendedName>
        <fullName>Rubrerythrin-1</fullName>
        <shortName>Rr 1</shortName>
    </recommendedName>
    <alternativeName>
        <fullName>NADH peroxidase</fullName>
        <shortName>NPXase</shortName>
        <shortName>Npx</shortName>
        <ecNumber>1.11.1.1</ecNumber>
    </alternativeName>
</protein>
<evidence type="ECO:0000250" key="1"/>
<evidence type="ECO:0000250" key="2">
    <source>
        <dbReference type="UniProtKB" id="P24931"/>
    </source>
</evidence>
<evidence type="ECO:0000255" key="3">
    <source>
        <dbReference type="PROSITE-ProRule" id="PRU00085"/>
    </source>
</evidence>
<evidence type="ECO:0000255" key="4">
    <source>
        <dbReference type="PROSITE-ProRule" id="PRU00241"/>
    </source>
</evidence>
<evidence type="ECO:0000269" key="5">
    <source>
    </source>
</evidence>